<dbReference type="EC" id="2.8.1.13" evidence="1"/>
<dbReference type="EMBL" id="BX640430">
    <property type="protein sequence ID" value="CAE37798.1"/>
    <property type="molecule type" value="Genomic_DNA"/>
</dbReference>
<dbReference type="RefSeq" id="WP_010928578.1">
    <property type="nucleotide sequence ID" value="NC_002928.3"/>
</dbReference>
<dbReference type="SMR" id="Q7U375"/>
<dbReference type="GeneID" id="93204287"/>
<dbReference type="KEGG" id="bpa:BPP2503"/>
<dbReference type="HOGENOM" id="CLU_035188_1_0_4"/>
<dbReference type="Proteomes" id="UP000001421">
    <property type="component" value="Chromosome"/>
</dbReference>
<dbReference type="GO" id="GO:0005737">
    <property type="term" value="C:cytoplasm"/>
    <property type="evidence" value="ECO:0007669"/>
    <property type="project" value="UniProtKB-SubCell"/>
</dbReference>
<dbReference type="GO" id="GO:0005524">
    <property type="term" value="F:ATP binding"/>
    <property type="evidence" value="ECO:0007669"/>
    <property type="project" value="UniProtKB-KW"/>
</dbReference>
<dbReference type="GO" id="GO:0000049">
    <property type="term" value="F:tRNA binding"/>
    <property type="evidence" value="ECO:0007669"/>
    <property type="project" value="UniProtKB-KW"/>
</dbReference>
<dbReference type="GO" id="GO:0103016">
    <property type="term" value="F:tRNA-uridine 2-sulfurtransferase activity"/>
    <property type="evidence" value="ECO:0007669"/>
    <property type="project" value="UniProtKB-EC"/>
</dbReference>
<dbReference type="GO" id="GO:0002143">
    <property type="term" value="P:tRNA wobble position uridine thiolation"/>
    <property type="evidence" value="ECO:0007669"/>
    <property type="project" value="TreeGrafter"/>
</dbReference>
<dbReference type="CDD" id="cd01998">
    <property type="entry name" value="MnmA_TRMU-like"/>
    <property type="match status" value="1"/>
</dbReference>
<dbReference type="FunFam" id="2.30.30.280:FF:000001">
    <property type="entry name" value="tRNA-specific 2-thiouridylase MnmA"/>
    <property type="match status" value="1"/>
</dbReference>
<dbReference type="FunFam" id="2.40.30.10:FF:000023">
    <property type="entry name" value="tRNA-specific 2-thiouridylase MnmA"/>
    <property type="match status" value="1"/>
</dbReference>
<dbReference type="FunFam" id="3.40.50.620:FF:000004">
    <property type="entry name" value="tRNA-specific 2-thiouridylase MnmA"/>
    <property type="match status" value="1"/>
</dbReference>
<dbReference type="Gene3D" id="2.30.30.280">
    <property type="entry name" value="Adenine nucleotide alpha hydrolases-like domains"/>
    <property type="match status" value="1"/>
</dbReference>
<dbReference type="Gene3D" id="3.40.50.620">
    <property type="entry name" value="HUPs"/>
    <property type="match status" value="1"/>
</dbReference>
<dbReference type="Gene3D" id="2.40.30.10">
    <property type="entry name" value="Translation factors"/>
    <property type="match status" value="1"/>
</dbReference>
<dbReference type="HAMAP" id="MF_00144">
    <property type="entry name" value="tRNA_thiouridyl_MnmA"/>
    <property type="match status" value="1"/>
</dbReference>
<dbReference type="InterPro" id="IPR004506">
    <property type="entry name" value="MnmA-like"/>
</dbReference>
<dbReference type="InterPro" id="IPR046885">
    <property type="entry name" value="MnmA-like_C"/>
</dbReference>
<dbReference type="InterPro" id="IPR046884">
    <property type="entry name" value="MnmA-like_central"/>
</dbReference>
<dbReference type="InterPro" id="IPR023382">
    <property type="entry name" value="MnmA-like_central_sf"/>
</dbReference>
<dbReference type="InterPro" id="IPR014729">
    <property type="entry name" value="Rossmann-like_a/b/a_fold"/>
</dbReference>
<dbReference type="NCBIfam" id="NF001138">
    <property type="entry name" value="PRK00143.1"/>
    <property type="match status" value="1"/>
</dbReference>
<dbReference type="NCBIfam" id="TIGR00420">
    <property type="entry name" value="trmU"/>
    <property type="match status" value="1"/>
</dbReference>
<dbReference type="PANTHER" id="PTHR11933:SF5">
    <property type="entry name" value="MITOCHONDRIAL TRNA-SPECIFIC 2-THIOURIDYLASE 1"/>
    <property type="match status" value="1"/>
</dbReference>
<dbReference type="PANTHER" id="PTHR11933">
    <property type="entry name" value="TRNA 5-METHYLAMINOMETHYL-2-THIOURIDYLATE -METHYLTRANSFERASE"/>
    <property type="match status" value="1"/>
</dbReference>
<dbReference type="Pfam" id="PF03054">
    <property type="entry name" value="tRNA_Me_trans"/>
    <property type="match status" value="1"/>
</dbReference>
<dbReference type="Pfam" id="PF20258">
    <property type="entry name" value="tRNA_Me_trans_C"/>
    <property type="match status" value="1"/>
</dbReference>
<dbReference type="Pfam" id="PF20259">
    <property type="entry name" value="tRNA_Me_trans_M"/>
    <property type="match status" value="1"/>
</dbReference>
<dbReference type="SUPFAM" id="SSF52402">
    <property type="entry name" value="Adenine nucleotide alpha hydrolases-like"/>
    <property type="match status" value="1"/>
</dbReference>
<name>MNMA_BORPA</name>
<reference key="1">
    <citation type="journal article" date="2003" name="Nat. Genet.">
        <title>Comparative analysis of the genome sequences of Bordetella pertussis, Bordetella parapertussis and Bordetella bronchiseptica.</title>
        <authorList>
            <person name="Parkhill J."/>
            <person name="Sebaihia M."/>
            <person name="Preston A."/>
            <person name="Murphy L.D."/>
            <person name="Thomson N.R."/>
            <person name="Harris D.E."/>
            <person name="Holden M.T.G."/>
            <person name="Churcher C.M."/>
            <person name="Bentley S.D."/>
            <person name="Mungall K.L."/>
            <person name="Cerdeno-Tarraga A.-M."/>
            <person name="Temple L."/>
            <person name="James K.D."/>
            <person name="Harris B."/>
            <person name="Quail M.A."/>
            <person name="Achtman M."/>
            <person name="Atkin R."/>
            <person name="Baker S."/>
            <person name="Basham D."/>
            <person name="Bason N."/>
            <person name="Cherevach I."/>
            <person name="Chillingworth T."/>
            <person name="Collins M."/>
            <person name="Cronin A."/>
            <person name="Davis P."/>
            <person name="Doggett J."/>
            <person name="Feltwell T."/>
            <person name="Goble A."/>
            <person name="Hamlin N."/>
            <person name="Hauser H."/>
            <person name="Holroyd S."/>
            <person name="Jagels K."/>
            <person name="Leather S."/>
            <person name="Moule S."/>
            <person name="Norberczak H."/>
            <person name="O'Neil S."/>
            <person name="Ormond D."/>
            <person name="Price C."/>
            <person name="Rabbinowitsch E."/>
            <person name="Rutter S."/>
            <person name="Sanders M."/>
            <person name="Saunders D."/>
            <person name="Seeger K."/>
            <person name="Sharp S."/>
            <person name="Simmonds M."/>
            <person name="Skelton J."/>
            <person name="Squares R."/>
            <person name="Squares S."/>
            <person name="Stevens K."/>
            <person name="Unwin L."/>
            <person name="Whitehead S."/>
            <person name="Barrell B.G."/>
            <person name="Maskell D.J."/>
        </authorList>
    </citation>
    <scope>NUCLEOTIDE SEQUENCE [LARGE SCALE GENOMIC DNA]</scope>
    <source>
        <strain>12822 / ATCC BAA-587 / NCTC 13253</strain>
    </source>
</reference>
<feature type="chain" id="PRO_0000349541" description="tRNA-specific 2-thiouridylase MnmA">
    <location>
        <begin position="1"/>
        <end position="371"/>
    </location>
</feature>
<feature type="region of interest" description="Interaction with target base in tRNA" evidence="1">
    <location>
        <begin position="100"/>
        <end position="102"/>
    </location>
</feature>
<feature type="region of interest" description="Interaction with tRNA" evidence="1">
    <location>
        <begin position="155"/>
        <end position="157"/>
    </location>
</feature>
<feature type="region of interest" description="Interaction with tRNA" evidence="1">
    <location>
        <begin position="321"/>
        <end position="322"/>
    </location>
</feature>
<feature type="active site" description="Nucleophile" evidence="1">
    <location>
        <position position="105"/>
    </location>
</feature>
<feature type="active site" description="Cysteine persulfide intermediate" evidence="1">
    <location>
        <position position="205"/>
    </location>
</feature>
<feature type="binding site" evidence="1">
    <location>
        <begin position="14"/>
        <end position="21"/>
    </location>
    <ligand>
        <name>ATP</name>
        <dbReference type="ChEBI" id="CHEBI:30616"/>
    </ligand>
</feature>
<feature type="binding site" evidence="1">
    <location>
        <position position="40"/>
    </location>
    <ligand>
        <name>ATP</name>
        <dbReference type="ChEBI" id="CHEBI:30616"/>
    </ligand>
</feature>
<feature type="binding site" evidence="1">
    <location>
        <position position="129"/>
    </location>
    <ligand>
        <name>ATP</name>
        <dbReference type="ChEBI" id="CHEBI:30616"/>
    </ligand>
</feature>
<feature type="site" description="Interaction with tRNA" evidence="1">
    <location>
        <position position="130"/>
    </location>
</feature>
<feature type="site" description="Interaction with tRNA" evidence="1">
    <location>
        <position position="354"/>
    </location>
</feature>
<feature type="disulfide bond" description="Alternate" evidence="1">
    <location>
        <begin position="105"/>
        <end position="205"/>
    </location>
</feature>
<proteinExistence type="inferred from homology"/>
<sequence>MPSNPTRKGRVVVGMSGGVDSSVTAWLLKQQGYEVVGLFMKNWEDDDDSEYCSTRQDLLDAASVADLVGVEFEYVNFAAEYKDRVFAEFLREYSAGRTPNPDVLCNAEIKFKAFLDHAMALGAEHIATGHYARVRTVETPAGPRHQLLKALDDTKDQSYFLHRLNQAQLARTLFPLGELRKTEVRRIAHEIGLHNAAKKDSTGICFIGERPFREFLNRYLPSEPGPILTPEGQRVGTHHGLSFYTLGQRKGLGVGGVKGRQRDDGTAEAWYAARKDLARNVLYVVQGHDHPWLLSAQLQAQDASWIAGEPPAAGAYGAKTRYRQVDAACRLDQAGGERFALAFEQAQWAVTPGQSAVLYDGEVCLGGGIII</sequence>
<gene>
    <name evidence="1" type="primary">mnmA</name>
    <name type="ordered locus">BPP2503</name>
</gene>
<evidence type="ECO:0000255" key="1">
    <source>
        <dbReference type="HAMAP-Rule" id="MF_00144"/>
    </source>
</evidence>
<keyword id="KW-0067">ATP-binding</keyword>
<keyword id="KW-0963">Cytoplasm</keyword>
<keyword id="KW-1015">Disulfide bond</keyword>
<keyword id="KW-0547">Nucleotide-binding</keyword>
<keyword id="KW-0694">RNA-binding</keyword>
<keyword id="KW-0808">Transferase</keyword>
<keyword id="KW-0819">tRNA processing</keyword>
<keyword id="KW-0820">tRNA-binding</keyword>
<comment type="function">
    <text evidence="1">Catalyzes the 2-thiolation of uridine at the wobble position (U34) of tRNA, leading to the formation of s(2)U34.</text>
</comment>
<comment type="catalytic activity">
    <reaction evidence="1">
        <text>S-sulfanyl-L-cysteinyl-[protein] + uridine(34) in tRNA + AH2 + ATP = 2-thiouridine(34) in tRNA + L-cysteinyl-[protein] + A + AMP + diphosphate + H(+)</text>
        <dbReference type="Rhea" id="RHEA:47032"/>
        <dbReference type="Rhea" id="RHEA-COMP:10131"/>
        <dbReference type="Rhea" id="RHEA-COMP:11726"/>
        <dbReference type="Rhea" id="RHEA-COMP:11727"/>
        <dbReference type="Rhea" id="RHEA-COMP:11728"/>
        <dbReference type="ChEBI" id="CHEBI:13193"/>
        <dbReference type="ChEBI" id="CHEBI:15378"/>
        <dbReference type="ChEBI" id="CHEBI:17499"/>
        <dbReference type="ChEBI" id="CHEBI:29950"/>
        <dbReference type="ChEBI" id="CHEBI:30616"/>
        <dbReference type="ChEBI" id="CHEBI:33019"/>
        <dbReference type="ChEBI" id="CHEBI:61963"/>
        <dbReference type="ChEBI" id="CHEBI:65315"/>
        <dbReference type="ChEBI" id="CHEBI:87170"/>
        <dbReference type="ChEBI" id="CHEBI:456215"/>
        <dbReference type="EC" id="2.8.1.13"/>
    </reaction>
</comment>
<comment type="subcellular location">
    <subcellularLocation>
        <location evidence="1">Cytoplasm</location>
    </subcellularLocation>
</comment>
<comment type="similarity">
    <text evidence="1">Belongs to the MnmA/TRMU family.</text>
</comment>
<organism>
    <name type="scientific">Bordetella parapertussis (strain 12822 / ATCC BAA-587 / NCTC 13253)</name>
    <dbReference type="NCBI Taxonomy" id="257311"/>
    <lineage>
        <taxon>Bacteria</taxon>
        <taxon>Pseudomonadati</taxon>
        <taxon>Pseudomonadota</taxon>
        <taxon>Betaproteobacteria</taxon>
        <taxon>Burkholderiales</taxon>
        <taxon>Alcaligenaceae</taxon>
        <taxon>Bordetella</taxon>
    </lineage>
</organism>
<protein>
    <recommendedName>
        <fullName evidence="1">tRNA-specific 2-thiouridylase MnmA</fullName>
        <ecNumber evidence="1">2.8.1.13</ecNumber>
    </recommendedName>
</protein>
<accession>Q7U375</accession>